<protein>
    <recommendedName>
        <fullName evidence="1">Arginine--tRNA ligase</fullName>
        <ecNumber evidence="1">6.1.1.19</ecNumber>
    </recommendedName>
    <alternativeName>
        <fullName evidence="1">Arginyl-tRNA synthetase</fullName>
        <shortName evidence="1">ArgRS</shortName>
    </alternativeName>
</protein>
<keyword id="KW-0030">Aminoacyl-tRNA synthetase</keyword>
<keyword id="KW-0067">ATP-binding</keyword>
<keyword id="KW-0963">Cytoplasm</keyword>
<keyword id="KW-0436">Ligase</keyword>
<keyword id="KW-0547">Nucleotide-binding</keyword>
<keyword id="KW-0648">Protein biosynthesis</keyword>
<keyword id="KW-1185">Reference proteome</keyword>
<name>SYR_NEIG1</name>
<dbReference type="EC" id="6.1.1.19" evidence="1"/>
<dbReference type="EMBL" id="AE004969">
    <property type="protein sequence ID" value="AAW89652.1"/>
    <property type="molecule type" value="Genomic_DNA"/>
</dbReference>
<dbReference type="RefSeq" id="WP_010951154.1">
    <property type="nucleotide sequence ID" value="NC_002946.2"/>
</dbReference>
<dbReference type="RefSeq" id="YP_208064.1">
    <property type="nucleotide sequence ID" value="NC_002946.2"/>
</dbReference>
<dbReference type="SMR" id="Q5F835"/>
<dbReference type="STRING" id="242231.NGO_0963"/>
<dbReference type="DNASU" id="3282609"/>
<dbReference type="KEGG" id="ngo:NGO_0963"/>
<dbReference type="PATRIC" id="fig|242231.10.peg.1127"/>
<dbReference type="HOGENOM" id="CLU_006406_5_1_4"/>
<dbReference type="Proteomes" id="UP000000535">
    <property type="component" value="Chromosome"/>
</dbReference>
<dbReference type="GO" id="GO:0005737">
    <property type="term" value="C:cytoplasm"/>
    <property type="evidence" value="ECO:0007669"/>
    <property type="project" value="UniProtKB-SubCell"/>
</dbReference>
<dbReference type="GO" id="GO:0004814">
    <property type="term" value="F:arginine-tRNA ligase activity"/>
    <property type="evidence" value="ECO:0007669"/>
    <property type="project" value="UniProtKB-UniRule"/>
</dbReference>
<dbReference type="GO" id="GO:0005524">
    <property type="term" value="F:ATP binding"/>
    <property type="evidence" value="ECO:0007669"/>
    <property type="project" value="UniProtKB-UniRule"/>
</dbReference>
<dbReference type="GO" id="GO:0006420">
    <property type="term" value="P:arginyl-tRNA aminoacylation"/>
    <property type="evidence" value="ECO:0007669"/>
    <property type="project" value="UniProtKB-UniRule"/>
</dbReference>
<dbReference type="CDD" id="cd07956">
    <property type="entry name" value="Anticodon_Ia_Arg"/>
    <property type="match status" value="1"/>
</dbReference>
<dbReference type="CDD" id="cd00671">
    <property type="entry name" value="ArgRS_core"/>
    <property type="match status" value="1"/>
</dbReference>
<dbReference type="FunFam" id="3.40.50.620:FF:000030">
    <property type="entry name" value="Arginine--tRNA ligase"/>
    <property type="match status" value="1"/>
</dbReference>
<dbReference type="FunFam" id="1.10.730.10:FF:000006">
    <property type="entry name" value="Arginyl-tRNA synthetase 2, mitochondrial"/>
    <property type="match status" value="1"/>
</dbReference>
<dbReference type="Gene3D" id="3.30.1360.70">
    <property type="entry name" value="Arginyl tRNA synthetase N-terminal domain"/>
    <property type="match status" value="1"/>
</dbReference>
<dbReference type="Gene3D" id="3.40.50.620">
    <property type="entry name" value="HUPs"/>
    <property type="match status" value="1"/>
</dbReference>
<dbReference type="Gene3D" id="1.10.730.10">
    <property type="entry name" value="Isoleucyl-tRNA Synthetase, Domain 1"/>
    <property type="match status" value="1"/>
</dbReference>
<dbReference type="HAMAP" id="MF_00123">
    <property type="entry name" value="Arg_tRNA_synth"/>
    <property type="match status" value="1"/>
</dbReference>
<dbReference type="InterPro" id="IPR001412">
    <property type="entry name" value="aa-tRNA-synth_I_CS"/>
</dbReference>
<dbReference type="InterPro" id="IPR001278">
    <property type="entry name" value="Arg-tRNA-ligase"/>
</dbReference>
<dbReference type="InterPro" id="IPR005148">
    <property type="entry name" value="Arg-tRNA-synth_N"/>
</dbReference>
<dbReference type="InterPro" id="IPR036695">
    <property type="entry name" value="Arg-tRNA-synth_N_sf"/>
</dbReference>
<dbReference type="InterPro" id="IPR035684">
    <property type="entry name" value="ArgRS_core"/>
</dbReference>
<dbReference type="InterPro" id="IPR008909">
    <property type="entry name" value="DALR_anticod-bd"/>
</dbReference>
<dbReference type="InterPro" id="IPR014729">
    <property type="entry name" value="Rossmann-like_a/b/a_fold"/>
</dbReference>
<dbReference type="InterPro" id="IPR009080">
    <property type="entry name" value="tRNAsynth_Ia_anticodon-bd"/>
</dbReference>
<dbReference type="NCBIfam" id="TIGR00456">
    <property type="entry name" value="argS"/>
    <property type="match status" value="1"/>
</dbReference>
<dbReference type="PANTHER" id="PTHR11956:SF5">
    <property type="entry name" value="ARGININE--TRNA LIGASE, CYTOPLASMIC"/>
    <property type="match status" value="1"/>
</dbReference>
<dbReference type="PANTHER" id="PTHR11956">
    <property type="entry name" value="ARGINYL-TRNA SYNTHETASE"/>
    <property type="match status" value="1"/>
</dbReference>
<dbReference type="Pfam" id="PF03485">
    <property type="entry name" value="Arg_tRNA_synt_N"/>
    <property type="match status" value="1"/>
</dbReference>
<dbReference type="Pfam" id="PF05746">
    <property type="entry name" value="DALR_1"/>
    <property type="match status" value="1"/>
</dbReference>
<dbReference type="Pfam" id="PF00750">
    <property type="entry name" value="tRNA-synt_1d"/>
    <property type="match status" value="1"/>
</dbReference>
<dbReference type="PRINTS" id="PR01038">
    <property type="entry name" value="TRNASYNTHARG"/>
</dbReference>
<dbReference type="SMART" id="SM01016">
    <property type="entry name" value="Arg_tRNA_synt_N"/>
    <property type="match status" value="1"/>
</dbReference>
<dbReference type="SMART" id="SM00836">
    <property type="entry name" value="DALR_1"/>
    <property type="match status" value="1"/>
</dbReference>
<dbReference type="SUPFAM" id="SSF47323">
    <property type="entry name" value="Anticodon-binding domain of a subclass of class I aminoacyl-tRNA synthetases"/>
    <property type="match status" value="1"/>
</dbReference>
<dbReference type="SUPFAM" id="SSF55190">
    <property type="entry name" value="Arginyl-tRNA synthetase (ArgRS), N-terminal 'additional' domain"/>
    <property type="match status" value="1"/>
</dbReference>
<dbReference type="SUPFAM" id="SSF52374">
    <property type="entry name" value="Nucleotidylyl transferase"/>
    <property type="match status" value="1"/>
</dbReference>
<dbReference type="PROSITE" id="PS00178">
    <property type="entry name" value="AA_TRNA_LIGASE_I"/>
    <property type="match status" value="1"/>
</dbReference>
<sequence length="572" mass="62620">MNLHQTVEHEAAAAFAAAGIAGSPVVLQPTKNAEHGDFQINGVMGAAKKAKQNPRELAQKVADALAGNAVIESAEVAGPGFINLRLRHEFLAQNIHAALNDARFGVAKTAQPQTVVIDYSSPNLAKEMHVGHLRSSIIGDSISRVLEFTGNTVIRQNHVGDWGTQFGMLVAYLVEQQKDNAAFELADLEQFYRAAKVRFDEDPAFADTAREYVVKLQGGDETVLALWKQFVDISLSHAQAVYDTLGLKLRPEDVAGESKYNDDLQPVADDLVQKGLAVEDDGAKVVFLDEFKNKEGEPAAFIVQKQGGGFLYASTDLACLRYRIGRLKAGRLLYVVDHRQALHFEQLFTTSRKAGYLPEDAKAEFIGFGTMMGKDGKPFKTRSGDTVKLVDLLTEAVERATALVKEKNPELGADEAAKIGKTVGIGAVKYADLSKNRTSDYVFDWDAMLSFEGNTAPYLQYAYTRVQSVFRKAGEWDATAPTVLTEPLEKQLAAELLKFENVLQSVADTAYPHYLAAYLYQAATLFSRFYEACPILKAEGASRNSRLQLAKLTGNTLKQGLDLLGIDVLDVM</sequence>
<organism>
    <name type="scientific">Neisseria gonorrhoeae (strain ATCC 700825 / FA 1090)</name>
    <dbReference type="NCBI Taxonomy" id="242231"/>
    <lineage>
        <taxon>Bacteria</taxon>
        <taxon>Pseudomonadati</taxon>
        <taxon>Pseudomonadota</taxon>
        <taxon>Betaproteobacteria</taxon>
        <taxon>Neisseriales</taxon>
        <taxon>Neisseriaceae</taxon>
        <taxon>Neisseria</taxon>
    </lineage>
</organism>
<proteinExistence type="inferred from homology"/>
<feature type="chain" id="PRO_0000242053" description="Arginine--tRNA ligase">
    <location>
        <begin position="1"/>
        <end position="572"/>
    </location>
</feature>
<feature type="short sequence motif" description="'HIGH' region">
    <location>
        <begin position="122"/>
        <end position="132"/>
    </location>
</feature>
<comment type="catalytic activity">
    <reaction evidence="1">
        <text>tRNA(Arg) + L-arginine + ATP = L-arginyl-tRNA(Arg) + AMP + diphosphate</text>
        <dbReference type="Rhea" id="RHEA:20301"/>
        <dbReference type="Rhea" id="RHEA-COMP:9658"/>
        <dbReference type="Rhea" id="RHEA-COMP:9673"/>
        <dbReference type="ChEBI" id="CHEBI:30616"/>
        <dbReference type="ChEBI" id="CHEBI:32682"/>
        <dbReference type="ChEBI" id="CHEBI:33019"/>
        <dbReference type="ChEBI" id="CHEBI:78442"/>
        <dbReference type="ChEBI" id="CHEBI:78513"/>
        <dbReference type="ChEBI" id="CHEBI:456215"/>
        <dbReference type="EC" id="6.1.1.19"/>
    </reaction>
</comment>
<comment type="subunit">
    <text evidence="1">Monomer.</text>
</comment>
<comment type="subcellular location">
    <subcellularLocation>
        <location evidence="1">Cytoplasm</location>
    </subcellularLocation>
</comment>
<comment type="similarity">
    <text evidence="1">Belongs to the class-I aminoacyl-tRNA synthetase family.</text>
</comment>
<accession>Q5F835</accession>
<reference key="1">
    <citation type="submission" date="2003-03" db="EMBL/GenBank/DDBJ databases">
        <title>The complete genome sequence of Neisseria gonorrhoeae.</title>
        <authorList>
            <person name="Lewis L.A."/>
            <person name="Gillaspy A.F."/>
            <person name="McLaughlin R.E."/>
            <person name="Gipson M."/>
            <person name="Ducey T.F."/>
            <person name="Ownbey T."/>
            <person name="Hartman K."/>
            <person name="Nydick C."/>
            <person name="Carson M.B."/>
            <person name="Vaughn J."/>
            <person name="Thomson C."/>
            <person name="Song L."/>
            <person name="Lin S."/>
            <person name="Yuan X."/>
            <person name="Najar F."/>
            <person name="Zhan M."/>
            <person name="Ren Q."/>
            <person name="Zhu H."/>
            <person name="Qi S."/>
            <person name="Kenton S.M."/>
            <person name="Lai H."/>
            <person name="White J.D."/>
            <person name="Clifton S."/>
            <person name="Roe B.A."/>
            <person name="Dyer D.W."/>
        </authorList>
    </citation>
    <scope>NUCLEOTIDE SEQUENCE [LARGE SCALE GENOMIC DNA]</scope>
    <source>
        <strain>ATCC 700825 / FA 1090</strain>
    </source>
</reference>
<evidence type="ECO:0000255" key="1">
    <source>
        <dbReference type="HAMAP-Rule" id="MF_00123"/>
    </source>
</evidence>
<gene>
    <name evidence="1" type="primary">argS</name>
    <name type="ordered locus">NGO_0963</name>
</gene>